<comment type="function">
    <text evidence="1">Synthesizes alpha-1,4-glucan chains using ADP-glucose.</text>
</comment>
<comment type="catalytic activity">
    <reaction evidence="1">
        <text>[(1-&gt;4)-alpha-D-glucosyl](n) + ADP-alpha-D-glucose = [(1-&gt;4)-alpha-D-glucosyl](n+1) + ADP + H(+)</text>
        <dbReference type="Rhea" id="RHEA:18189"/>
        <dbReference type="Rhea" id="RHEA-COMP:9584"/>
        <dbReference type="Rhea" id="RHEA-COMP:9587"/>
        <dbReference type="ChEBI" id="CHEBI:15378"/>
        <dbReference type="ChEBI" id="CHEBI:15444"/>
        <dbReference type="ChEBI" id="CHEBI:57498"/>
        <dbReference type="ChEBI" id="CHEBI:456216"/>
        <dbReference type="EC" id="2.4.1.21"/>
    </reaction>
</comment>
<comment type="pathway">
    <text evidence="1">Glycan biosynthesis; glycogen biosynthesis.</text>
</comment>
<comment type="similarity">
    <text evidence="1">Belongs to the glycosyltransferase 1 family. Bacterial/plant glycogen synthase subfamily.</text>
</comment>
<sequence length="483" mass="51088">MTTLAVLSVASELFPLIKTGGLADVAGALPAALRANDVAVTSLLPGYPAVLGGIEDPQQVHSFNELFGGTARLLAARCGDLDLFVLDAPHLYVRPGNPYVGPDGKDWPDNGLRFAALAQVGAALGQGLLPHYKPDVLHAHDWQTGLLPAYLKYSGRPGPKTVFTIHNLAFQGRFPYELLGRLGLPERAFGLDGIEYYGGIGYLKAGLQLADRITTVSPTYAAEIQGSEAGMGLDGLLRLRADRLSGILNGIDTDVWNPASDALISATYDVESIAARARNKKVLQARFGLKPEPGALLYGVISRLSWQKGLDLLLEALPQLIGGGAQLALLGSGDAELEQGYAAAARKYPGQVGAVIGYDEALAHQIQAGADALLVPSRFEPCGLTQLCALRYGAVPVVARVGGLADTVVDANEMATATGVATGVQFAPVTTDALIKAFGKTRALFADVVAWRNLQINGMTTDVSWKNPAQHYAKLYRDLVAER</sequence>
<organism>
    <name type="scientific">Rhodopseudomonas palustris (strain ATCC BAA-98 / CGA009)</name>
    <dbReference type="NCBI Taxonomy" id="258594"/>
    <lineage>
        <taxon>Bacteria</taxon>
        <taxon>Pseudomonadati</taxon>
        <taxon>Pseudomonadota</taxon>
        <taxon>Alphaproteobacteria</taxon>
        <taxon>Hyphomicrobiales</taxon>
        <taxon>Nitrobacteraceae</taxon>
        <taxon>Rhodopseudomonas</taxon>
    </lineage>
</organism>
<protein>
    <recommendedName>
        <fullName evidence="1">Glycogen synthase</fullName>
        <ecNumber evidence="1">2.4.1.21</ecNumber>
    </recommendedName>
    <alternativeName>
        <fullName evidence="1">Starch [bacterial glycogen] synthase</fullName>
    </alternativeName>
</protein>
<name>GLGA_RHOPA</name>
<evidence type="ECO:0000255" key="1">
    <source>
        <dbReference type="HAMAP-Rule" id="MF_00484"/>
    </source>
</evidence>
<gene>
    <name evidence="1" type="primary">glgA</name>
    <name type="synonym">glgA1</name>
    <name type="ordered locus">RPA0382</name>
</gene>
<proteinExistence type="inferred from homology"/>
<feature type="chain" id="PRO_0000188641" description="Glycogen synthase">
    <location>
        <begin position="1"/>
        <end position="483"/>
    </location>
</feature>
<feature type="binding site" evidence="1">
    <location>
        <position position="18"/>
    </location>
    <ligand>
        <name>ADP-alpha-D-glucose</name>
        <dbReference type="ChEBI" id="CHEBI:57498"/>
    </ligand>
</feature>
<reference key="1">
    <citation type="journal article" date="2004" name="Nat. Biotechnol.">
        <title>Complete genome sequence of the metabolically versatile photosynthetic bacterium Rhodopseudomonas palustris.</title>
        <authorList>
            <person name="Larimer F.W."/>
            <person name="Chain P."/>
            <person name="Hauser L."/>
            <person name="Lamerdin J.E."/>
            <person name="Malfatti S."/>
            <person name="Do L."/>
            <person name="Land M.L."/>
            <person name="Pelletier D.A."/>
            <person name="Beatty J.T."/>
            <person name="Lang A.S."/>
            <person name="Tabita F.R."/>
            <person name="Gibson J.L."/>
            <person name="Hanson T.E."/>
            <person name="Bobst C."/>
            <person name="Torres y Torres J.L."/>
            <person name="Peres C."/>
            <person name="Harrison F.H."/>
            <person name="Gibson J."/>
            <person name="Harwood C.S."/>
        </authorList>
    </citation>
    <scope>NUCLEOTIDE SEQUENCE [LARGE SCALE GENOMIC DNA]</scope>
    <source>
        <strain>ATCC BAA-98 / CGA009</strain>
    </source>
</reference>
<dbReference type="EC" id="2.4.1.21" evidence="1"/>
<dbReference type="EMBL" id="BX572594">
    <property type="protein sequence ID" value="CAE25826.1"/>
    <property type="molecule type" value="Genomic_DNA"/>
</dbReference>
<dbReference type="RefSeq" id="WP_011155950.1">
    <property type="nucleotide sequence ID" value="NZ_CP116810.1"/>
</dbReference>
<dbReference type="SMR" id="Q6NCT7"/>
<dbReference type="STRING" id="258594.RPA0382"/>
<dbReference type="CAZy" id="GT5">
    <property type="family name" value="Glycosyltransferase Family 5"/>
</dbReference>
<dbReference type="GeneID" id="66891395"/>
<dbReference type="eggNOG" id="COG0297">
    <property type="taxonomic scope" value="Bacteria"/>
</dbReference>
<dbReference type="HOGENOM" id="CLU_009583_18_4_5"/>
<dbReference type="PhylomeDB" id="Q6NCT7"/>
<dbReference type="UniPathway" id="UPA00164"/>
<dbReference type="GO" id="GO:0005829">
    <property type="term" value="C:cytosol"/>
    <property type="evidence" value="ECO:0007669"/>
    <property type="project" value="TreeGrafter"/>
</dbReference>
<dbReference type="GO" id="GO:0009011">
    <property type="term" value="F:alpha-1,4-glucan glucosyltransferase (ADP-glucose donor) activity"/>
    <property type="evidence" value="ECO:0007669"/>
    <property type="project" value="UniProtKB-UniRule"/>
</dbReference>
<dbReference type="GO" id="GO:0004373">
    <property type="term" value="F:alpha-1,4-glucan glucosyltransferase (UDP-glucose donor) activity"/>
    <property type="evidence" value="ECO:0007669"/>
    <property type="project" value="InterPro"/>
</dbReference>
<dbReference type="GO" id="GO:0005978">
    <property type="term" value="P:glycogen biosynthetic process"/>
    <property type="evidence" value="ECO:0007669"/>
    <property type="project" value="UniProtKB-UniRule"/>
</dbReference>
<dbReference type="CDD" id="cd03791">
    <property type="entry name" value="GT5_Glycogen_synthase_DULL1-like"/>
    <property type="match status" value="1"/>
</dbReference>
<dbReference type="Gene3D" id="3.40.50.2000">
    <property type="entry name" value="Glycogen Phosphorylase B"/>
    <property type="match status" value="2"/>
</dbReference>
<dbReference type="HAMAP" id="MF_00484">
    <property type="entry name" value="Glycogen_synth"/>
    <property type="match status" value="1"/>
</dbReference>
<dbReference type="InterPro" id="IPR001296">
    <property type="entry name" value="Glyco_trans_1"/>
</dbReference>
<dbReference type="InterPro" id="IPR011835">
    <property type="entry name" value="GS/SS"/>
</dbReference>
<dbReference type="InterPro" id="IPR013534">
    <property type="entry name" value="Starch_synth_cat_dom"/>
</dbReference>
<dbReference type="NCBIfam" id="TIGR02095">
    <property type="entry name" value="glgA"/>
    <property type="match status" value="1"/>
</dbReference>
<dbReference type="NCBIfam" id="NF001899">
    <property type="entry name" value="PRK00654.1-2"/>
    <property type="match status" value="1"/>
</dbReference>
<dbReference type="NCBIfam" id="NF010699">
    <property type="entry name" value="PRK14099.1"/>
    <property type="match status" value="1"/>
</dbReference>
<dbReference type="PANTHER" id="PTHR45825:SF11">
    <property type="entry name" value="ALPHA AMYLASE DOMAIN-CONTAINING PROTEIN"/>
    <property type="match status" value="1"/>
</dbReference>
<dbReference type="PANTHER" id="PTHR45825">
    <property type="entry name" value="GRANULE-BOUND STARCH SYNTHASE 1, CHLOROPLASTIC/AMYLOPLASTIC"/>
    <property type="match status" value="1"/>
</dbReference>
<dbReference type="Pfam" id="PF08323">
    <property type="entry name" value="Glyco_transf_5"/>
    <property type="match status" value="1"/>
</dbReference>
<dbReference type="Pfam" id="PF00534">
    <property type="entry name" value="Glycos_transf_1"/>
    <property type="match status" value="1"/>
</dbReference>
<dbReference type="SUPFAM" id="SSF53756">
    <property type="entry name" value="UDP-Glycosyltransferase/glycogen phosphorylase"/>
    <property type="match status" value="1"/>
</dbReference>
<accession>Q6NCT7</accession>
<keyword id="KW-0320">Glycogen biosynthesis</keyword>
<keyword id="KW-0328">Glycosyltransferase</keyword>
<keyword id="KW-0808">Transferase</keyword>